<sequence length="410" mass="46199">MEPPPAPGPERLFDSHRLPSDGFLLLALLLYAPVGLCLLVLRLFLGLHVFLVSCALPDSVLRRFVVRTMCAVLGLVARQEDSGLRDHRVRVLISNHVTPFDHNIVNLLTTCSTPLLNSPPSFVCWSRGFMEMDRRVELVESLKKFCASTRLPPTPLLLFPEEEATNGREGLLRFSSWPFSIQDVVQPLTLQVQRPLVSVTVSDASWVSELLWSLFVPFTVYQVRWLHPIRRQLGEENEEFALRVQQLVAKELGQIGTRLTPADKAEHMKRQRHPRLRPQSVQSSFPSPPSPSSDVQLTILAQRVKEVLPHVPLNVIQRDLARTGCVDLTITNLLEGAVAFMPEDVTEGSQSLPTASAPKFPSSGLVTPQPTALTFAKSSWARQESLQERKQALYEYARRRFRERQAQEAE</sequence>
<accession>A1L134</accession>
<comment type="function">
    <text evidence="1">Plays a role in the translocation of terminally misfolded proteins from the endoplasmic reticulum lumen to the cytoplasm and their degradation by the proteasome (By similarity). Plays a role in lipid droplet formation (By similarity). Induces lipid droplet clustering (By similarity). Recruits ubiquitin-conjugating enzyme UBE2G2 to lipid droplets which facilitates its interaction with ubiquitin ligases AMFR/gp78 and RNF139/TRC8, leading to sterol-induced ubiquitination of HMGCR and its subsequent proteasomal degradation (By similarity). Also required for the degradation of INSIG1, SREBF1 and SREBF2 (By similarity). Plays a role in regulating assembly and secretion of very low density lipoprotein particles and stability of apolipoprotein APOB (By similarity).</text>
</comment>
<comment type="subunit">
    <text evidence="1">Identified in a complex that contains SEL1L, OS9, FAF2/UBXD8, UBE2J1/UBC6E and AUP1 (By similarity). Interacts with the cytoplasmic tail of ITGA2B, ITGA1, ITGA2, ITGA5, ITGAV and ITGAM (By similarity). Interacts (via C-terminus) with UBE2G2; the interaction recruits UBE2G2 to lipid droplets (By similarity). Interacts with ubiquitin ligases AMFR/gp78 and RNF139/TRC8; this promotes interaction of UBE2G2 with AMFR and RNF139 (By similarity). Interacts with apolipoprotein APOB (By similarity).</text>
</comment>
<comment type="subcellular location">
    <subcellularLocation>
        <location evidence="1">Endoplasmic reticulum membrane</location>
        <topology evidence="1">Peripheral membrane protein</topology>
    </subcellularLocation>
    <subcellularLocation>
        <location evidence="1">Lipid droplet</location>
    </subcellularLocation>
</comment>
<comment type="domain">
    <text evidence="1">The CUE domain is required for interaction with the ER quality control machinery and misfolded substrates, ubiquitination, lipid clustering and interaction with AMFR but is not required for localization to lipid droplets.</text>
</comment>
<comment type="PTM">
    <text evidence="1">Monoubiquitinated and diubiquitinated.</text>
</comment>
<comment type="similarity">
    <text evidence="4">Belongs to the AUP1 family.</text>
</comment>
<proteinExistence type="evidence at transcript level"/>
<dbReference type="EMBL" id="CH473957">
    <property type="protein sequence ID" value="EDL91111.1"/>
    <property type="molecule type" value="Genomic_DNA"/>
</dbReference>
<dbReference type="EMBL" id="BC127544">
    <property type="protein sequence ID" value="AAI27545.1"/>
    <property type="molecule type" value="mRNA"/>
</dbReference>
<dbReference type="RefSeq" id="NP_001073368.1">
    <property type="nucleotide sequence ID" value="NM_001079899.1"/>
</dbReference>
<dbReference type="SMR" id="A1L134"/>
<dbReference type="BioGRID" id="595359">
    <property type="interactions" value="2"/>
</dbReference>
<dbReference type="FunCoup" id="A1L134">
    <property type="interactions" value="2200"/>
</dbReference>
<dbReference type="STRING" id="10116.ENSRNOP00000010602"/>
<dbReference type="iPTMnet" id="A1L134"/>
<dbReference type="PhosphoSitePlus" id="A1L134"/>
<dbReference type="PaxDb" id="10116-ENSRNOP00000010602"/>
<dbReference type="PeptideAtlas" id="A1L134"/>
<dbReference type="GeneID" id="680423"/>
<dbReference type="KEGG" id="rno:680423"/>
<dbReference type="UCSC" id="RGD:1591777">
    <property type="organism name" value="rat"/>
</dbReference>
<dbReference type="AGR" id="RGD:1591777"/>
<dbReference type="CTD" id="550"/>
<dbReference type="RGD" id="1591777">
    <property type="gene designation" value="Aup1"/>
</dbReference>
<dbReference type="VEuPathDB" id="HostDB:ENSRNOG00000007842"/>
<dbReference type="eggNOG" id="KOG2898">
    <property type="taxonomic scope" value="Eukaryota"/>
</dbReference>
<dbReference type="HOGENOM" id="CLU_045696_0_0_1"/>
<dbReference type="InParanoid" id="A1L134"/>
<dbReference type="OrthoDB" id="77227at9989"/>
<dbReference type="PhylomeDB" id="A1L134"/>
<dbReference type="PRO" id="PR:A1L134"/>
<dbReference type="Proteomes" id="UP000002494">
    <property type="component" value="Chromosome 4"/>
</dbReference>
<dbReference type="Proteomes" id="UP000234681">
    <property type="component" value="Chromosome 4"/>
</dbReference>
<dbReference type="Bgee" id="ENSRNOG00000007842">
    <property type="expression patterns" value="Expressed in pancreas and 20 other cell types or tissues"/>
</dbReference>
<dbReference type="GO" id="GO:0005776">
    <property type="term" value="C:autophagosome"/>
    <property type="evidence" value="ECO:0000266"/>
    <property type="project" value="RGD"/>
</dbReference>
<dbReference type="GO" id="GO:0005783">
    <property type="term" value="C:endoplasmic reticulum"/>
    <property type="evidence" value="ECO:0000266"/>
    <property type="project" value="RGD"/>
</dbReference>
<dbReference type="GO" id="GO:0005789">
    <property type="term" value="C:endoplasmic reticulum membrane"/>
    <property type="evidence" value="ECO:0000250"/>
    <property type="project" value="UniProtKB"/>
</dbReference>
<dbReference type="GO" id="GO:0005811">
    <property type="term" value="C:lipid droplet"/>
    <property type="evidence" value="ECO:0000250"/>
    <property type="project" value="UniProtKB"/>
</dbReference>
<dbReference type="GO" id="GO:0043130">
    <property type="term" value="F:ubiquitin binding"/>
    <property type="evidence" value="ECO:0007669"/>
    <property type="project" value="InterPro"/>
</dbReference>
<dbReference type="GO" id="GO:0031624">
    <property type="term" value="F:ubiquitin conjugating enzyme binding"/>
    <property type="evidence" value="ECO:0000250"/>
    <property type="project" value="UniProtKB"/>
</dbReference>
<dbReference type="GO" id="GO:0031625">
    <property type="term" value="F:ubiquitin protein ligase binding"/>
    <property type="evidence" value="ECO:0000250"/>
    <property type="project" value="UniProtKB"/>
</dbReference>
<dbReference type="GO" id="GO:0036503">
    <property type="term" value="P:ERAD pathway"/>
    <property type="evidence" value="ECO:0000250"/>
    <property type="project" value="UniProtKB"/>
</dbReference>
<dbReference type="GO" id="GO:0140042">
    <property type="term" value="P:lipid droplet formation"/>
    <property type="evidence" value="ECO:0000250"/>
    <property type="project" value="UniProtKB"/>
</dbReference>
<dbReference type="GO" id="GO:0034389">
    <property type="term" value="P:lipid droplet organization"/>
    <property type="evidence" value="ECO:0000250"/>
    <property type="project" value="UniProtKB"/>
</dbReference>
<dbReference type="GO" id="GO:0061724">
    <property type="term" value="P:lipophagy"/>
    <property type="evidence" value="ECO:0000266"/>
    <property type="project" value="RGD"/>
</dbReference>
<dbReference type="GO" id="GO:1990044">
    <property type="term" value="P:protein localization to lipid droplet"/>
    <property type="evidence" value="ECO:0000250"/>
    <property type="project" value="UniProtKB"/>
</dbReference>
<dbReference type="GO" id="GO:0009615">
    <property type="term" value="P:response to virus"/>
    <property type="evidence" value="ECO:0000266"/>
    <property type="project" value="RGD"/>
</dbReference>
<dbReference type="GO" id="GO:0030970">
    <property type="term" value="P:retrograde protein transport, ER to cytosol"/>
    <property type="evidence" value="ECO:0000266"/>
    <property type="project" value="RGD"/>
</dbReference>
<dbReference type="CDD" id="cd14420">
    <property type="entry name" value="CUE_AUP1"/>
    <property type="match status" value="1"/>
</dbReference>
<dbReference type="FunFam" id="1.10.8.10:FF:000049">
    <property type="entry name" value="ancient ubiquitous protein 1 isoform X2"/>
    <property type="match status" value="1"/>
</dbReference>
<dbReference type="Gene3D" id="1.10.8.10">
    <property type="entry name" value="DNA helicase RuvA subunit, C-terminal domain"/>
    <property type="match status" value="1"/>
</dbReference>
<dbReference type="InterPro" id="IPR048056">
    <property type="entry name" value="AUP1_CUE"/>
</dbReference>
<dbReference type="InterPro" id="IPR003892">
    <property type="entry name" value="CUE"/>
</dbReference>
<dbReference type="PANTHER" id="PTHR15486">
    <property type="entry name" value="ANCIENT UBIQUITOUS PROTEIN"/>
    <property type="match status" value="1"/>
</dbReference>
<dbReference type="PANTHER" id="PTHR15486:SF96">
    <property type="entry name" value="LIPID DROPLET-REGULATING VLDL ASSEMBLY FACTOR AUP1"/>
    <property type="match status" value="1"/>
</dbReference>
<dbReference type="Pfam" id="PF02845">
    <property type="entry name" value="CUE"/>
    <property type="match status" value="1"/>
</dbReference>
<dbReference type="SMART" id="SM00546">
    <property type="entry name" value="CUE"/>
    <property type="match status" value="1"/>
</dbReference>
<dbReference type="SUPFAM" id="SSF69593">
    <property type="entry name" value="Glycerol-3-phosphate (1)-acyltransferase"/>
    <property type="match status" value="1"/>
</dbReference>
<dbReference type="PROSITE" id="PS51140">
    <property type="entry name" value="CUE"/>
    <property type="match status" value="1"/>
</dbReference>
<name>AUP1_RAT</name>
<organism>
    <name type="scientific">Rattus norvegicus</name>
    <name type="common">Rat</name>
    <dbReference type="NCBI Taxonomy" id="10116"/>
    <lineage>
        <taxon>Eukaryota</taxon>
        <taxon>Metazoa</taxon>
        <taxon>Chordata</taxon>
        <taxon>Craniata</taxon>
        <taxon>Vertebrata</taxon>
        <taxon>Euteleostomi</taxon>
        <taxon>Mammalia</taxon>
        <taxon>Eutheria</taxon>
        <taxon>Euarchontoglires</taxon>
        <taxon>Glires</taxon>
        <taxon>Rodentia</taxon>
        <taxon>Myomorpha</taxon>
        <taxon>Muroidea</taxon>
        <taxon>Muridae</taxon>
        <taxon>Murinae</taxon>
        <taxon>Rattus</taxon>
    </lineage>
</organism>
<keyword id="KW-0007">Acetylation</keyword>
<keyword id="KW-0256">Endoplasmic reticulum</keyword>
<keyword id="KW-0551">Lipid droplet</keyword>
<keyword id="KW-0472">Membrane</keyword>
<keyword id="KW-0597">Phosphoprotein</keyword>
<keyword id="KW-1185">Reference proteome</keyword>
<keyword id="KW-0832">Ubl conjugation</keyword>
<gene>
    <name evidence="5" type="primary">Aup1</name>
</gene>
<feature type="chain" id="PRO_0000359870" description="Lipid droplet-regulating VLDL assembly factor AUP1">
    <location>
        <begin position="1"/>
        <end position="410"/>
    </location>
</feature>
<feature type="topological domain" description="Cytoplasmic" evidence="1">
    <location>
        <begin position="1"/>
        <end position="20"/>
    </location>
</feature>
<feature type="intramembrane region" evidence="1">
    <location>
        <begin position="21"/>
        <end position="41"/>
    </location>
</feature>
<feature type="topological domain" description="Cytoplasmic" evidence="1">
    <location>
        <begin position="42"/>
        <end position="410"/>
    </location>
</feature>
<feature type="domain" description="CUE" evidence="2">
    <location>
        <begin position="296"/>
        <end position="338"/>
    </location>
</feature>
<feature type="region of interest" description="Disordered" evidence="3">
    <location>
        <begin position="259"/>
        <end position="293"/>
    </location>
</feature>
<feature type="region of interest" description="Disordered" evidence="3">
    <location>
        <begin position="348"/>
        <end position="367"/>
    </location>
</feature>
<feature type="modified residue" description="N-acetylmethionine" evidence="1">
    <location>
        <position position="1"/>
    </location>
</feature>
<feature type="modified residue" description="Phosphoserine" evidence="1">
    <location>
        <position position="292"/>
    </location>
</feature>
<feature type="modified residue" description="Phosphoserine" evidence="1">
    <location>
        <position position="363"/>
    </location>
</feature>
<feature type="modified residue" description="Phosphothreonine" evidence="1">
    <location>
        <position position="367"/>
    </location>
</feature>
<reference key="1">
    <citation type="submission" date="2005-07" db="EMBL/GenBank/DDBJ databases">
        <authorList>
            <person name="Mural R.J."/>
            <person name="Adams M.D."/>
            <person name="Myers E.W."/>
            <person name="Smith H.O."/>
            <person name="Venter J.C."/>
        </authorList>
    </citation>
    <scope>NUCLEOTIDE SEQUENCE [LARGE SCALE GENOMIC DNA]</scope>
</reference>
<reference key="2">
    <citation type="journal article" date="2004" name="Genome Res.">
        <title>The status, quality, and expansion of the NIH full-length cDNA project: the Mammalian Gene Collection (MGC).</title>
        <authorList>
            <consortium name="The MGC Project Team"/>
        </authorList>
    </citation>
    <scope>NUCLEOTIDE SEQUENCE [LARGE SCALE MRNA]</scope>
    <source>
        <tissue>Brain</tissue>
    </source>
</reference>
<evidence type="ECO:0000250" key="1">
    <source>
        <dbReference type="UniProtKB" id="Q9Y679"/>
    </source>
</evidence>
<evidence type="ECO:0000255" key="2">
    <source>
        <dbReference type="PROSITE-ProRule" id="PRU00468"/>
    </source>
</evidence>
<evidence type="ECO:0000256" key="3">
    <source>
        <dbReference type="SAM" id="MobiDB-lite"/>
    </source>
</evidence>
<evidence type="ECO:0000305" key="4"/>
<evidence type="ECO:0000312" key="5">
    <source>
        <dbReference type="RGD" id="1591777"/>
    </source>
</evidence>
<protein>
    <recommendedName>
        <fullName evidence="5">Lipid droplet-regulating VLDL assembly factor AUP1</fullName>
    </recommendedName>
    <alternativeName>
        <fullName evidence="1">Ancient ubiquitous protein 1</fullName>
    </alternativeName>
</protein>